<accession>Q8EMZ1</accession>
<protein>
    <recommendedName>
        <fullName evidence="1">Ribose-5-phosphate isomerase A 2</fullName>
        <ecNumber evidence="1">5.3.1.6</ecNumber>
    </recommendedName>
    <alternativeName>
        <fullName evidence="1">Phosphoriboisomerase A 2</fullName>
        <shortName evidence="1">PRI 2</shortName>
    </alternativeName>
</protein>
<comment type="function">
    <text evidence="1">Catalyzes the reversible conversion of ribose-5-phosphate to ribulose 5-phosphate.</text>
</comment>
<comment type="catalytic activity">
    <reaction evidence="1">
        <text>aldehydo-D-ribose 5-phosphate = D-ribulose 5-phosphate</text>
        <dbReference type="Rhea" id="RHEA:14657"/>
        <dbReference type="ChEBI" id="CHEBI:58121"/>
        <dbReference type="ChEBI" id="CHEBI:58273"/>
        <dbReference type="EC" id="5.3.1.6"/>
    </reaction>
</comment>
<comment type="pathway">
    <text evidence="1">Carbohydrate degradation; pentose phosphate pathway; D-ribose 5-phosphate from D-ribulose 5-phosphate (non-oxidative stage): step 1/1.</text>
</comment>
<comment type="subunit">
    <text evidence="1">Homodimer.</text>
</comment>
<comment type="similarity">
    <text evidence="1">Belongs to the ribose 5-phosphate isomerase family.</text>
</comment>
<keyword id="KW-0413">Isomerase</keyword>
<keyword id="KW-1185">Reference proteome</keyword>
<reference key="1">
    <citation type="journal article" date="2002" name="Nucleic Acids Res.">
        <title>Genome sequence of Oceanobacillus iheyensis isolated from the Iheya Ridge and its unexpected adaptive capabilities to extreme environments.</title>
        <authorList>
            <person name="Takami H."/>
            <person name="Takaki Y."/>
            <person name="Uchiyama I."/>
        </authorList>
    </citation>
    <scope>NUCLEOTIDE SEQUENCE [LARGE SCALE GENOMIC DNA]</scope>
    <source>
        <strain>DSM 14371 / CIP 107618 / JCM 11309 / KCTC 3954 / HTE831</strain>
    </source>
</reference>
<proteinExistence type="inferred from homology"/>
<name>RPIA2_OCEIH</name>
<dbReference type="EC" id="5.3.1.6" evidence="1"/>
<dbReference type="EMBL" id="BA000028">
    <property type="protein sequence ID" value="BAC14655.1"/>
    <property type="molecule type" value="Genomic_DNA"/>
</dbReference>
<dbReference type="RefSeq" id="WP_011067093.1">
    <property type="nucleotide sequence ID" value="NC_004193.1"/>
</dbReference>
<dbReference type="SMR" id="Q8EMZ1"/>
<dbReference type="STRING" id="221109.gene:10734951"/>
<dbReference type="KEGG" id="oih:OB2699"/>
<dbReference type="eggNOG" id="COG0120">
    <property type="taxonomic scope" value="Bacteria"/>
</dbReference>
<dbReference type="HOGENOM" id="CLU_056590_1_0_9"/>
<dbReference type="OrthoDB" id="5870696at2"/>
<dbReference type="PhylomeDB" id="Q8EMZ1"/>
<dbReference type="UniPathway" id="UPA00115">
    <property type="reaction ID" value="UER00412"/>
</dbReference>
<dbReference type="Proteomes" id="UP000000822">
    <property type="component" value="Chromosome"/>
</dbReference>
<dbReference type="GO" id="GO:0005829">
    <property type="term" value="C:cytosol"/>
    <property type="evidence" value="ECO:0007669"/>
    <property type="project" value="TreeGrafter"/>
</dbReference>
<dbReference type="GO" id="GO:0004751">
    <property type="term" value="F:ribose-5-phosphate isomerase activity"/>
    <property type="evidence" value="ECO:0007669"/>
    <property type="project" value="UniProtKB-UniRule"/>
</dbReference>
<dbReference type="GO" id="GO:0006014">
    <property type="term" value="P:D-ribose metabolic process"/>
    <property type="evidence" value="ECO:0007669"/>
    <property type="project" value="TreeGrafter"/>
</dbReference>
<dbReference type="GO" id="GO:0009052">
    <property type="term" value="P:pentose-phosphate shunt, non-oxidative branch"/>
    <property type="evidence" value="ECO:0007669"/>
    <property type="project" value="UniProtKB-UniRule"/>
</dbReference>
<dbReference type="CDD" id="cd01398">
    <property type="entry name" value="RPI_A"/>
    <property type="match status" value="1"/>
</dbReference>
<dbReference type="FunFam" id="3.40.50.1360:FF:000001">
    <property type="entry name" value="Ribose-5-phosphate isomerase A"/>
    <property type="match status" value="1"/>
</dbReference>
<dbReference type="Gene3D" id="3.30.70.260">
    <property type="match status" value="1"/>
</dbReference>
<dbReference type="Gene3D" id="3.40.50.1360">
    <property type="match status" value="1"/>
</dbReference>
<dbReference type="HAMAP" id="MF_00170">
    <property type="entry name" value="Rib_5P_isom_A"/>
    <property type="match status" value="1"/>
</dbReference>
<dbReference type="InterPro" id="IPR037171">
    <property type="entry name" value="NagB/RpiA_transferase-like"/>
</dbReference>
<dbReference type="InterPro" id="IPR020672">
    <property type="entry name" value="Ribose5P_isomerase_typA_subgr"/>
</dbReference>
<dbReference type="InterPro" id="IPR004788">
    <property type="entry name" value="Ribose5P_isomerase_type_A"/>
</dbReference>
<dbReference type="NCBIfam" id="NF001924">
    <property type="entry name" value="PRK00702.1"/>
    <property type="match status" value="1"/>
</dbReference>
<dbReference type="NCBIfam" id="TIGR00021">
    <property type="entry name" value="rpiA"/>
    <property type="match status" value="1"/>
</dbReference>
<dbReference type="PANTHER" id="PTHR11934">
    <property type="entry name" value="RIBOSE-5-PHOSPHATE ISOMERASE"/>
    <property type="match status" value="1"/>
</dbReference>
<dbReference type="PANTHER" id="PTHR11934:SF0">
    <property type="entry name" value="RIBOSE-5-PHOSPHATE ISOMERASE"/>
    <property type="match status" value="1"/>
</dbReference>
<dbReference type="Pfam" id="PF06026">
    <property type="entry name" value="Rib_5-P_isom_A"/>
    <property type="match status" value="1"/>
</dbReference>
<dbReference type="SUPFAM" id="SSF75445">
    <property type="entry name" value="D-ribose-5-phosphate isomerase (RpiA), lid domain"/>
    <property type="match status" value="1"/>
</dbReference>
<dbReference type="SUPFAM" id="SSF100950">
    <property type="entry name" value="NagB/RpiA/CoA transferase-like"/>
    <property type="match status" value="1"/>
</dbReference>
<feature type="chain" id="PRO_0000158442" description="Ribose-5-phosphate isomerase A 2">
    <location>
        <begin position="1"/>
        <end position="224"/>
    </location>
</feature>
<feature type="active site" description="Proton acceptor" evidence="1">
    <location>
        <position position="105"/>
    </location>
</feature>
<feature type="binding site" evidence="1">
    <location>
        <begin position="27"/>
        <end position="30"/>
    </location>
    <ligand>
        <name>substrate</name>
    </ligand>
</feature>
<feature type="binding site" evidence="1">
    <location>
        <begin position="83"/>
        <end position="86"/>
    </location>
    <ligand>
        <name>substrate</name>
    </ligand>
</feature>
<feature type="binding site" evidence="1">
    <location>
        <begin position="96"/>
        <end position="99"/>
    </location>
    <ligand>
        <name>substrate</name>
    </ligand>
</feature>
<feature type="binding site" evidence="1">
    <location>
        <position position="123"/>
    </location>
    <ligand>
        <name>substrate</name>
    </ligand>
</feature>
<gene>
    <name evidence="1" type="primary">rpiA2</name>
    <name type="ordered locus">OB2699</name>
</gene>
<sequence length="224" mass="24828">MEYSDKQIAAQEAVRYIKDGMVIGIGSGSTVNEFLYCLAARMRKERLQVVGIPASKKSERLATELGIPLTTFATYQNVDIAIDGTDEIDDQLYLVKGGGGSLVREKMIDLVAETFIVIASGKKKIKKLGSFPVPVEVVPFGWQATEQRLQQFGCQTNLRMVEEDIFVSDNQNYIIDCDFKEIDDAEALHRSLKQIVGVIETGIFINMVDKAIVADNGELSILEK</sequence>
<organism>
    <name type="scientific">Oceanobacillus iheyensis (strain DSM 14371 / CIP 107618 / JCM 11309 / KCTC 3954 / HTE831)</name>
    <dbReference type="NCBI Taxonomy" id="221109"/>
    <lineage>
        <taxon>Bacteria</taxon>
        <taxon>Bacillati</taxon>
        <taxon>Bacillota</taxon>
        <taxon>Bacilli</taxon>
        <taxon>Bacillales</taxon>
        <taxon>Bacillaceae</taxon>
        <taxon>Oceanobacillus</taxon>
    </lineage>
</organism>
<evidence type="ECO:0000255" key="1">
    <source>
        <dbReference type="HAMAP-Rule" id="MF_00170"/>
    </source>
</evidence>